<accession>B5ZBN2</accession>
<reference key="1">
    <citation type="submission" date="2008-10" db="EMBL/GenBank/DDBJ databases">
        <title>Genome sequence of Ureaplasma urealyticum serovar 10 ATCC-33699.</title>
        <authorList>
            <person name="Shrivastava S."/>
            <person name="Methe B.A."/>
            <person name="Glass J."/>
            <person name="White K."/>
            <person name="Duffy L.B."/>
        </authorList>
    </citation>
    <scope>NUCLEOTIDE SEQUENCE [LARGE SCALE GENOMIC DNA]</scope>
    <source>
        <strain>ATCC 33699 / Western</strain>
    </source>
</reference>
<name>RSMH_UREU1</name>
<sequence>MEFNQHTTVLLNETIELLHVKPDGIYVDCTFGRGGHSQLILKKLSKKGKLICIDQDQQAIDFANNLFKDNPNVIVIKTNFKNLKSVLYDHQIFHVDGFVFDLGLSSPQLDDPERGFSYHKDALLDMRMDQEQKLNAHYIVNHYSFAKLVNIFTKYGEIKYAKTIANGIVKERSTKAINTTLELVEIIKNYSPKKILFEKKHPARLFFQAIRIEVNDELNILKKAFNDAISMLNPLGVVAIISFHSLEDKIVKKVFNNYAKNKLPKEIPLNNYVNQYSLLNQKIMPSTQELNDNNRSRSSILRGLVKNY</sequence>
<proteinExistence type="inferred from homology"/>
<evidence type="ECO:0000255" key="1">
    <source>
        <dbReference type="HAMAP-Rule" id="MF_01007"/>
    </source>
</evidence>
<keyword id="KW-0963">Cytoplasm</keyword>
<keyword id="KW-0489">Methyltransferase</keyword>
<keyword id="KW-0698">rRNA processing</keyword>
<keyword id="KW-0949">S-adenosyl-L-methionine</keyword>
<keyword id="KW-0808">Transferase</keyword>
<dbReference type="EC" id="2.1.1.199" evidence="1"/>
<dbReference type="EMBL" id="CP001184">
    <property type="protein sequence ID" value="ACI60060.1"/>
    <property type="molecule type" value="Genomic_DNA"/>
</dbReference>
<dbReference type="RefSeq" id="WP_012560271.1">
    <property type="nucleotide sequence ID" value="NC_011374.1"/>
</dbReference>
<dbReference type="SMR" id="B5ZBN2"/>
<dbReference type="STRING" id="565575.UUR10_0429"/>
<dbReference type="KEGG" id="uue:UUR10_0429"/>
<dbReference type="eggNOG" id="COG0275">
    <property type="taxonomic scope" value="Bacteria"/>
</dbReference>
<dbReference type="HOGENOM" id="CLU_038422_2_0_14"/>
<dbReference type="OrthoDB" id="9806637at2"/>
<dbReference type="Proteomes" id="UP000002018">
    <property type="component" value="Chromosome"/>
</dbReference>
<dbReference type="GO" id="GO:0005737">
    <property type="term" value="C:cytoplasm"/>
    <property type="evidence" value="ECO:0007669"/>
    <property type="project" value="UniProtKB-SubCell"/>
</dbReference>
<dbReference type="GO" id="GO:0071424">
    <property type="term" value="F:rRNA (cytosine-N4-)-methyltransferase activity"/>
    <property type="evidence" value="ECO:0007669"/>
    <property type="project" value="UniProtKB-UniRule"/>
</dbReference>
<dbReference type="GO" id="GO:0070475">
    <property type="term" value="P:rRNA base methylation"/>
    <property type="evidence" value="ECO:0007669"/>
    <property type="project" value="UniProtKB-UniRule"/>
</dbReference>
<dbReference type="Gene3D" id="1.10.150.170">
    <property type="entry name" value="Putative methyltransferase TM0872, insert domain"/>
    <property type="match status" value="1"/>
</dbReference>
<dbReference type="Gene3D" id="3.40.50.150">
    <property type="entry name" value="Vaccinia Virus protein VP39"/>
    <property type="match status" value="1"/>
</dbReference>
<dbReference type="HAMAP" id="MF_01007">
    <property type="entry name" value="16SrRNA_methyltr_H"/>
    <property type="match status" value="1"/>
</dbReference>
<dbReference type="InterPro" id="IPR002903">
    <property type="entry name" value="RsmH"/>
</dbReference>
<dbReference type="InterPro" id="IPR023397">
    <property type="entry name" value="SAM-dep_MeTrfase_MraW_recog"/>
</dbReference>
<dbReference type="InterPro" id="IPR029063">
    <property type="entry name" value="SAM-dependent_MTases_sf"/>
</dbReference>
<dbReference type="NCBIfam" id="TIGR00006">
    <property type="entry name" value="16S rRNA (cytosine(1402)-N(4))-methyltransferase RsmH"/>
    <property type="match status" value="1"/>
</dbReference>
<dbReference type="PANTHER" id="PTHR11265:SF0">
    <property type="entry name" value="12S RRNA N4-METHYLCYTIDINE METHYLTRANSFERASE"/>
    <property type="match status" value="1"/>
</dbReference>
<dbReference type="PANTHER" id="PTHR11265">
    <property type="entry name" value="S-ADENOSYL-METHYLTRANSFERASE MRAW"/>
    <property type="match status" value="1"/>
</dbReference>
<dbReference type="Pfam" id="PF01795">
    <property type="entry name" value="Methyltransf_5"/>
    <property type="match status" value="1"/>
</dbReference>
<dbReference type="PIRSF" id="PIRSF004486">
    <property type="entry name" value="MraW"/>
    <property type="match status" value="1"/>
</dbReference>
<dbReference type="SUPFAM" id="SSF81799">
    <property type="entry name" value="Putative methyltransferase TM0872, insert domain"/>
    <property type="match status" value="1"/>
</dbReference>
<dbReference type="SUPFAM" id="SSF53335">
    <property type="entry name" value="S-adenosyl-L-methionine-dependent methyltransferases"/>
    <property type="match status" value="1"/>
</dbReference>
<gene>
    <name evidence="1" type="primary">rsmH</name>
    <name type="synonym">mraW</name>
    <name type="ordered locus">UUR10_0429</name>
</gene>
<comment type="function">
    <text evidence="1">Specifically methylates the N4 position of cytidine in position 1402 (C1402) of 16S rRNA.</text>
</comment>
<comment type="catalytic activity">
    <reaction evidence="1">
        <text>cytidine(1402) in 16S rRNA + S-adenosyl-L-methionine = N(4)-methylcytidine(1402) in 16S rRNA + S-adenosyl-L-homocysteine + H(+)</text>
        <dbReference type="Rhea" id="RHEA:42928"/>
        <dbReference type="Rhea" id="RHEA-COMP:10286"/>
        <dbReference type="Rhea" id="RHEA-COMP:10287"/>
        <dbReference type="ChEBI" id="CHEBI:15378"/>
        <dbReference type="ChEBI" id="CHEBI:57856"/>
        <dbReference type="ChEBI" id="CHEBI:59789"/>
        <dbReference type="ChEBI" id="CHEBI:74506"/>
        <dbReference type="ChEBI" id="CHEBI:82748"/>
        <dbReference type="EC" id="2.1.1.199"/>
    </reaction>
</comment>
<comment type="subcellular location">
    <subcellularLocation>
        <location evidence="1">Cytoplasm</location>
    </subcellularLocation>
</comment>
<comment type="similarity">
    <text evidence="1">Belongs to the methyltransferase superfamily. RsmH family.</text>
</comment>
<protein>
    <recommendedName>
        <fullName evidence="1">Ribosomal RNA small subunit methyltransferase H</fullName>
        <ecNumber evidence="1">2.1.1.199</ecNumber>
    </recommendedName>
    <alternativeName>
        <fullName evidence="1">16S rRNA m(4)C1402 methyltransferase</fullName>
    </alternativeName>
    <alternativeName>
        <fullName evidence="1">rRNA (cytosine-N(4)-)-methyltransferase RsmH</fullName>
    </alternativeName>
</protein>
<organism>
    <name type="scientific">Ureaplasma urealyticum serovar 10 (strain ATCC 33699 / Western)</name>
    <dbReference type="NCBI Taxonomy" id="565575"/>
    <lineage>
        <taxon>Bacteria</taxon>
        <taxon>Bacillati</taxon>
        <taxon>Mycoplasmatota</taxon>
        <taxon>Mycoplasmoidales</taxon>
        <taxon>Mycoplasmoidaceae</taxon>
        <taxon>Ureaplasma</taxon>
    </lineage>
</organism>
<feature type="chain" id="PRO_0000387204" description="Ribosomal RNA small subunit methyltransferase H">
    <location>
        <begin position="1"/>
        <end position="308"/>
    </location>
</feature>
<feature type="binding site" evidence="1">
    <location>
        <begin position="34"/>
        <end position="36"/>
    </location>
    <ligand>
        <name>S-adenosyl-L-methionine</name>
        <dbReference type="ChEBI" id="CHEBI:59789"/>
    </ligand>
</feature>
<feature type="binding site" evidence="1">
    <location>
        <position position="54"/>
    </location>
    <ligand>
        <name>S-adenosyl-L-methionine</name>
        <dbReference type="ChEBI" id="CHEBI:59789"/>
    </ligand>
</feature>
<feature type="binding site" evidence="1">
    <location>
        <position position="80"/>
    </location>
    <ligand>
        <name>S-adenosyl-L-methionine</name>
        <dbReference type="ChEBI" id="CHEBI:59789"/>
    </ligand>
</feature>
<feature type="binding site" evidence="1">
    <location>
        <position position="101"/>
    </location>
    <ligand>
        <name>S-adenosyl-L-methionine</name>
        <dbReference type="ChEBI" id="CHEBI:59789"/>
    </ligand>
</feature>
<feature type="binding site" evidence="1">
    <location>
        <position position="108"/>
    </location>
    <ligand>
        <name>S-adenosyl-L-methionine</name>
        <dbReference type="ChEBI" id="CHEBI:59789"/>
    </ligand>
</feature>